<dbReference type="EC" id="6.3.3.1" evidence="1"/>
<dbReference type="EMBL" id="CP001389">
    <property type="protein sequence ID" value="ACP24723.1"/>
    <property type="molecule type" value="Genomic_DNA"/>
</dbReference>
<dbReference type="RefSeq" id="WP_012707507.1">
    <property type="nucleotide sequence ID" value="NC_012587.1"/>
</dbReference>
<dbReference type="RefSeq" id="YP_002825476.1">
    <property type="nucleotide sequence ID" value="NC_012587.1"/>
</dbReference>
<dbReference type="SMR" id="C3M9F7"/>
<dbReference type="STRING" id="394.NGR_c09330"/>
<dbReference type="KEGG" id="rhi:NGR_c09330"/>
<dbReference type="PATRIC" id="fig|394.7.peg.3751"/>
<dbReference type="eggNOG" id="COG0150">
    <property type="taxonomic scope" value="Bacteria"/>
</dbReference>
<dbReference type="HOGENOM" id="CLU_047116_0_0_5"/>
<dbReference type="OrthoDB" id="9777881at2"/>
<dbReference type="UniPathway" id="UPA00074">
    <property type="reaction ID" value="UER00129"/>
</dbReference>
<dbReference type="Proteomes" id="UP000001054">
    <property type="component" value="Chromosome"/>
</dbReference>
<dbReference type="GO" id="GO:0005829">
    <property type="term" value="C:cytosol"/>
    <property type="evidence" value="ECO:0007669"/>
    <property type="project" value="TreeGrafter"/>
</dbReference>
<dbReference type="GO" id="GO:0005524">
    <property type="term" value="F:ATP binding"/>
    <property type="evidence" value="ECO:0007669"/>
    <property type="project" value="UniProtKB-KW"/>
</dbReference>
<dbReference type="GO" id="GO:0004637">
    <property type="term" value="F:phosphoribosylamine-glycine ligase activity"/>
    <property type="evidence" value="ECO:0007669"/>
    <property type="project" value="TreeGrafter"/>
</dbReference>
<dbReference type="GO" id="GO:0004641">
    <property type="term" value="F:phosphoribosylformylglycinamidine cyclo-ligase activity"/>
    <property type="evidence" value="ECO:0007669"/>
    <property type="project" value="UniProtKB-UniRule"/>
</dbReference>
<dbReference type="GO" id="GO:0006189">
    <property type="term" value="P:'de novo' IMP biosynthetic process"/>
    <property type="evidence" value="ECO:0007669"/>
    <property type="project" value="UniProtKB-UniRule"/>
</dbReference>
<dbReference type="GO" id="GO:0046084">
    <property type="term" value="P:adenine biosynthetic process"/>
    <property type="evidence" value="ECO:0007669"/>
    <property type="project" value="TreeGrafter"/>
</dbReference>
<dbReference type="CDD" id="cd02196">
    <property type="entry name" value="PurM"/>
    <property type="match status" value="1"/>
</dbReference>
<dbReference type="FunFam" id="3.30.1330.10:FF:000001">
    <property type="entry name" value="Phosphoribosylformylglycinamidine cyclo-ligase"/>
    <property type="match status" value="1"/>
</dbReference>
<dbReference type="FunFam" id="3.90.650.10:FF:000007">
    <property type="entry name" value="Trifunctional purine biosynthetic protein adenosine-3"/>
    <property type="match status" value="1"/>
</dbReference>
<dbReference type="Gene3D" id="3.90.650.10">
    <property type="entry name" value="PurM-like C-terminal domain"/>
    <property type="match status" value="1"/>
</dbReference>
<dbReference type="Gene3D" id="3.30.1330.10">
    <property type="entry name" value="PurM-like, N-terminal domain"/>
    <property type="match status" value="1"/>
</dbReference>
<dbReference type="HAMAP" id="MF_00741">
    <property type="entry name" value="AIRS"/>
    <property type="match status" value="1"/>
</dbReference>
<dbReference type="InterPro" id="IPR010918">
    <property type="entry name" value="PurM-like_C_dom"/>
</dbReference>
<dbReference type="InterPro" id="IPR036676">
    <property type="entry name" value="PurM-like_C_sf"/>
</dbReference>
<dbReference type="InterPro" id="IPR016188">
    <property type="entry name" value="PurM-like_N"/>
</dbReference>
<dbReference type="InterPro" id="IPR036921">
    <property type="entry name" value="PurM-like_N_sf"/>
</dbReference>
<dbReference type="InterPro" id="IPR004733">
    <property type="entry name" value="PurM_cligase"/>
</dbReference>
<dbReference type="NCBIfam" id="TIGR00878">
    <property type="entry name" value="purM"/>
    <property type="match status" value="1"/>
</dbReference>
<dbReference type="PANTHER" id="PTHR10520:SF12">
    <property type="entry name" value="TRIFUNCTIONAL PURINE BIOSYNTHETIC PROTEIN ADENOSINE-3"/>
    <property type="match status" value="1"/>
</dbReference>
<dbReference type="PANTHER" id="PTHR10520">
    <property type="entry name" value="TRIFUNCTIONAL PURINE BIOSYNTHETIC PROTEIN ADENOSINE-3-RELATED"/>
    <property type="match status" value="1"/>
</dbReference>
<dbReference type="Pfam" id="PF00586">
    <property type="entry name" value="AIRS"/>
    <property type="match status" value="1"/>
</dbReference>
<dbReference type="Pfam" id="PF02769">
    <property type="entry name" value="AIRS_C"/>
    <property type="match status" value="1"/>
</dbReference>
<dbReference type="SUPFAM" id="SSF56042">
    <property type="entry name" value="PurM C-terminal domain-like"/>
    <property type="match status" value="1"/>
</dbReference>
<dbReference type="SUPFAM" id="SSF55326">
    <property type="entry name" value="PurM N-terminal domain-like"/>
    <property type="match status" value="1"/>
</dbReference>
<evidence type="ECO:0000255" key="1">
    <source>
        <dbReference type="HAMAP-Rule" id="MF_00741"/>
    </source>
</evidence>
<comment type="catalytic activity">
    <reaction evidence="1">
        <text>2-formamido-N(1)-(5-O-phospho-beta-D-ribosyl)acetamidine + ATP = 5-amino-1-(5-phospho-beta-D-ribosyl)imidazole + ADP + phosphate + H(+)</text>
        <dbReference type="Rhea" id="RHEA:23032"/>
        <dbReference type="ChEBI" id="CHEBI:15378"/>
        <dbReference type="ChEBI" id="CHEBI:30616"/>
        <dbReference type="ChEBI" id="CHEBI:43474"/>
        <dbReference type="ChEBI" id="CHEBI:137981"/>
        <dbReference type="ChEBI" id="CHEBI:147287"/>
        <dbReference type="ChEBI" id="CHEBI:456216"/>
        <dbReference type="EC" id="6.3.3.1"/>
    </reaction>
</comment>
<comment type="pathway">
    <text evidence="1">Purine metabolism; IMP biosynthesis via de novo pathway; 5-amino-1-(5-phospho-D-ribosyl)imidazole from N(2)-formyl-N(1)-(5-phospho-D-ribosyl)glycinamide: step 2/2.</text>
</comment>
<comment type="subcellular location">
    <subcellularLocation>
        <location evidence="1">Cytoplasm</location>
    </subcellularLocation>
</comment>
<comment type="similarity">
    <text evidence="1">Belongs to the AIR synthase family.</text>
</comment>
<name>PUR5_SINFN</name>
<keyword id="KW-0067">ATP-binding</keyword>
<keyword id="KW-0963">Cytoplasm</keyword>
<keyword id="KW-0436">Ligase</keyword>
<keyword id="KW-0547">Nucleotide-binding</keyword>
<keyword id="KW-0658">Purine biosynthesis</keyword>
<keyword id="KW-1185">Reference proteome</keyword>
<proteinExistence type="inferred from homology"/>
<sequence length="356" mass="36412">MSQSGKNGLTYSDAGVDIDAGNLMVEKIKPHVRSTRRPGADGEIGGFGGLFDLKAAGFTDPVLVAANDGVGTKLKIAIDANKHDTVGIDLVAMCVNDLVVQGAEPLFFLDYFATGKLDPDQGAAIVAGIAAGCREAGCALIGGETAEMPGMYSGGDYDLAGFAVGAAERGQLLPAGGIAEGDVILGLASSGVHSNGYSLVRKIVSLSGLAWDAPAPFGEGTLADLLMTPTRIYVKPLLKAIRATGAIKALAHITGGGFPENIPRVLPKHLAAEIDLDAIKPPAVFSWLAKTGGVAANEMLRTFNCGVGMIAVVPAEEADRVAAVLAGEGETVFRLGRMVARQDGAPGTIYKGSLAL</sequence>
<feature type="chain" id="PRO_1000148291" description="Phosphoribosylformylglycinamidine cyclo-ligase">
    <location>
        <begin position="1"/>
        <end position="356"/>
    </location>
</feature>
<reference key="1">
    <citation type="journal article" date="2009" name="Appl. Environ. Microbiol.">
        <title>Rhizobium sp. strain NGR234 possesses a remarkable number of secretion systems.</title>
        <authorList>
            <person name="Schmeisser C."/>
            <person name="Liesegang H."/>
            <person name="Krysciak D."/>
            <person name="Bakkou N."/>
            <person name="Le Quere A."/>
            <person name="Wollherr A."/>
            <person name="Heinemeyer I."/>
            <person name="Morgenstern B."/>
            <person name="Pommerening-Roeser A."/>
            <person name="Flores M."/>
            <person name="Palacios R."/>
            <person name="Brenner S."/>
            <person name="Gottschalk G."/>
            <person name="Schmitz R.A."/>
            <person name="Broughton W.J."/>
            <person name="Perret X."/>
            <person name="Strittmatter A.W."/>
            <person name="Streit W.R."/>
        </authorList>
    </citation>
    <scope>NUCLEOTIDE SEQUENCE [LARGE SCALE GENOMIC DNA]</scope>
    <source>
        <strain>NBRC 101917 / NGR234</strain>
    </source>
</reference>
<organism>
    <name type="scientific">Sinorhizobium fredii (strain NBRC 101917 / NGR234)</name>
    <dbReference type="NCBI Taxonomy" id="394"/>
    <lineage>
        <taxon>Bacteria</taxon>
        <taxon>Pseudomonadati</taxon>
        <taxon>Pseudomonadota</taxon>
        <taxon>Alphaproteobacteria</taxon>
        <taxon>Hyphomicrobiales</taxon>
        <taxon>Rhizobiaceae</taxon>
        <taxon>Sinorhizobium/Ensifer group</taxon>
        <taxon>Sinorhizobium</taxon>
    </lineage>
</organism>
<gene>
    <name evidence="1" type="primary">purM</name>
    <name type="ordered locus">NGR_c09330</name>
</gene>
<protein>
    <recommendedName>
        <fullName evidence="1">Phosphoribosylformylglycinamidine cyclo-ligase</fullName>
        <ecNumber evidence="1">6.3.3.1</ecNumber>
    </recommendedName>
    <alternativeName>
        <fullName evidence="1">AIR synthase</fullName>
    </alternativeName>
    <alternativeName>
        <fullName evidence="1">AIRS</fullName>
    </alternativeName>
    <alternativeName>
        <fullName evidence="1">Phosphoribosyl-aminoimidazole synthetase</fullName>
    </alternativeName>
</protein>
<accession>C3M9F7</accession>